<name>CLIC2_RAT</name>
<reference key="1">
    <citation type="journal article" date="2004" name="Genome Res.">
        <title>The status, quality, and expansion of the NIH full-length cDNA project: the Mammalian Gene Collection (MGC).</title>
        <authorList>
            <consortium name="The MGC Project Team"/>
        </authorList>
    </citation>
    <scope>NUCLEOTIDE SEQUENCE [LARGE SCALE MRNA]</scope>
    <source>
        <tissue>Spleen</tissue>
    </source>
</reference>
<keyword id="KW-0868">Chloride</keyword>
<keyword id="KW-0869">Chloride channel</keyword>
<keyword id="KW-0963">Cytoplasm</keyword>
<keyword id="KW-1015">Disulfide bond</keyword>
<keyword id="KW-0407">Ion channel</keyword>
<keyword id="KW-0406">Ion transport</keyword>
<keyword id="KW-0472">Membrane</keyword>
<keyword id="KW-0560">Oxidoreductase</keyword>
<keyword id="KW-1185">Reference proteome</keyword>
<keyword id="KW-0812">Transmembrane</keyword>
<keyword id="KW-1133">Transmembrane helix</keyword>
<keyword id="KW-0813">Transport</keyword>
<keyword id="KW-0851">Voltage-gated channel</keyword>
<evidence type="ECO:0000250" key="1"/>
<evidence type="ECO:0000250" key="2">
    <source>
        <dbReference type="UniProtKB" id="O15247"/>
    </source>
</evidence>
<evidence type="ECO:0000255" key="3"/>
<evidence type="ECO:0000255" key="4">
    <source>
        <dbReference type="PROSITE-ProRule" id="PRU00685"/>
    </source>
</evidence>
<evidence type="ECO:0000305" key="5"/>
<evidence type="ECO:0000312" key="6">
    <source>
        <dbReference type="RGD" id="1306580"/>
    </source>
</evidence>
<protein>
    <recommendedName>
        <fullName>Chloride intracellular channel protein 2</fullName>
    </recommendedName>
    <alternativeName>
        <fullName evidence="2">Glutaredoxin-like oxidoreductase CLIC2</fullName>
        <ecNumber evidence="2">1.8.-.-</ecNumber>
    </alternativeName>
    <alternativeName>
        <fullName evidence="2">Glutaredoxin-like peroxidase CLIC2</fullName>
        <ecNumber evidence="2">1.11.1.-</ecNumber>
    </alternativeName>
</protein>
<comment type="function">
    <text evidence="2">In the soluble state, catalyzes glutaredoxin-like thiol disulfide exchange reactions with reduced glutathione as electron donor. Displays weak glutathione peroxidase activity (By similarity). Can insert into membranes and form chloride ion channels. Membrane insertion seems to be redox-regulated and may occur only under oxidizing conditions. Modulates the activity of RYR2 and inhibits calcium influx (By similarity).</text>
</comment>
<comment type="catalytic activity">
    <reaction evidence="2">
        <text>chloride(in) = chloride(out)</text>
        <dbReference type="Rhea" id="RHEA:29823"/>
        <dbReference type="ChEBI" id="CHEBI:17996"/>
    </reaction>
</comment>
<comment type="catalytic activity">
    <reaction evidence="2">
        <text>tert-butyl hydroperoxide + 2 glutathione = tert-butanol + glutathione disulfide + H2O</text>
        <dbReference type="Rhea" id="RHEA:69412"/>
        <dbReference type="ChEBI" id="CHEBI:15377"/>
        <dbReference type="ChEBI" id="CHEBI:45895"/>
        <dbReference type="ChEBI" id="CHEBI:57925"/>
        <dbReference type="ChEBI" id="CHEBI:58297"/>
        <dbReference type="ChEBI" id="CHEBI:64090"/>
    </reaction>
    <physiologicalReaction direction="left-to-right" evidence="2">
        <dbReference type="Rhea" id="RHEA:69413"/>
    </physiologicalReaction>
</comment>
<comment type="catalytic activity">
    <reaction evidence="2">
        <text>cumene hydroperoxide + 2 glutathione = 2-phenylpropan-2-ol + glutathione disulfide + H2O</text>
        <dbReference type="Rhea" id="RHEA:69651"/>
        <dbReference type="ChEBI" id="CHEBI:15377"/>
        <dbReference type="ChEBI" id="CHEBI:57925"/>
        <dbReference type="ChEBI" id="CHEBI:58297"/>
        <dbReference type="ChEBI" id="CHEBI:78673"/>
        <dbReference type="ChEBI" id="CHEBI:131607"/>
    </reaction>
    <physiologicalReaction direction="left-to-right" evidence="2">
        <dbReference type="Rhea" id="RHEA:69652"/>
    </physiologicalReaction>
</comment>
<comment type="subunit">
    <text evidence="1">Monomer. Interacts with TRAPPC2 and RYR2 (By similarity).</text>
</comment>
<comment type="subcellular location">
    <subcellularLocation>
        <location evidence="1">Cytoplasm</location>
    </subcellularLocation>
    <subcellularLocation>
        <location evidence="1">Membrane</location>
        <topology evidence="1">Single-pass membrane protein</topology>
    </subcellularLocation>
    <text evidence="1">Exists both as soluble cytoplasmic protein and as membrane protein with probably a single transmembrane domain.</text>
</comment>
<comment type="domain">
    <text evidence="2">Members of this family may change from a globular, soluble state to a state where the N-terminal domain is inserted into the membrane and functions as a chloride channel. The redox status of the active cysteine in Cys-X-X-Cys motif likely determines the capacity to adopt a soluble or membrane-inserted state. A conformation change of the N-terminal domain is thought to expose hydrophobic surfaces that trigger membrane insertion.</text>
</comment>
<comment type="domain">
    <text evidence="2">The active G-site has a dithiol Cys-X-X-Cys motif which mediates glutathione-dependent redox catalysis.</text>
</comment>
<comment type="similarity">
    <text evidence="5">Belongs to the chloride channel CLIC family.</text>
</comment>
<gene>
    <name evidence="6" type="primary">Clic2</name>
</gene>
<feature type="chain" id="PRO_0000144206" description="Chloride intracellular channel protein 2">
    <location>
        <begin position="1"/>
        <end position="245"/>
    </location>
</feature>
<feature type="transmembrane region" description="Helical; Note=After insertion into the membrane" evidence="3">
    <location>
        <begin position="32"/>
        <end position="52"/>
    </location>
</feature>
<feature type="domain" description="GST C-terminal" evidence="4">
    <location>
        <begin position="76"/>
        <end position="239"/>
    </location>
</feature>
<feature type="region of interest" description="Required for insertion into the membrane" evidence="1">
    <location>
        <begin position="1"/>
        <end position="96"/>
    </location>
</feature>
<feature type="short sequence motif" description="G-site" evidence="2">
    <location>
        <begin position="30"/>
        <end position="33"/>
    </location>
</feature>
<feature type="binding site" evidence="2">
    <location>
        <position position="25"/>
    </location>
    <ligand>
        <name>glutathione</name>
        <dbReference type="ChEBI" id="CHEBI:57925"/>
    </ligand>
</feature>
<feature type="binding site" evidence="2">
    <location>
        <position position="227"/>
    </location>
    <ligand>
        <name>glutathione</name>
        <dbReference type="ChEBI" id="CHEBI:57925"/>
    </ligand>
</feature>
<feature type="disulfide bond" description="In soluble form" evidence="2">
    <location>
        <begin position="30"/>
        <end position="33"/>
    </location>
</feature>
<accession>Q5M883</accession>
<proteinExistence type="evidence at transcript level"/>
<dbReference type="EC" id="1.8.-.-" evidence="2"/>
<dbReference type="EC" id="1.11.1.-" evidence="2"/>
<dbReference type="EMBL" id="BC088182">
    <property type="protein sequence ID" value="AAH88182.1"/>
    <property type="molecule type" value="mRNA"/>
</dbReference>
<dbReference type="RefSeq" id="NP_001009651.1">
    <property type="nucleotide sequence ID" value="NM_001009651.1"/>
</dbReference>
<dbReference type="SMR" id="Q5M883"/>
<dbReference type="FunCoup" id="Q5M883">
    <property type="interactions" value="429"/>
</dbReference>
<dbReference type="STRING" id="10116.ENSRNOP00000000955"/>
<dbReference type="iPTMnet" id="Q5M883"/>
<dbReference type="PhosphoSitePlus" id="Q5M883"/>
<dbReference type="PaxDb" id="10116-ENSRNOP00000000955"/>
<dbReference type="Ensembl" id="ENSRNOT00000000955.7">
    <property type="protein sequence ID" value="ENSRNOP00000000955.5"/>
    <property type="gene ID" value="ENSRNOG00000000728.7"/>
</dbReference>
<dbReference type="GeneID" id="294141"/>
<dbReference type="KEGG" id="rno:294141"/>
<dbReference type="UCSC" id="RGD:1306580">
    <property type="organism name" value="rat"/>
</dbReference>
<dbReference type="AGR" id="RGD:1306580"/>
<dbReference type="CTD" id="1193"/>
<dbReference type="RGD" id="1306580">
    <property type="gene designation" value="Clic2"/>
</dbReference>
<dbReference type="eggNOG" id="KOG1422">
    <property type="taxonomic scope" value="Eukaryota"/>
</dbReference>
<dbReference type="GeneTree" id="ENSGT00940000161397"/>
<dbReference type="HOGENOM" id="CLU_061051_1_0_1"/>
<dbReference type="InParanoid" id="Q5M883"/>
<dbReference type="OMA" id="CAEDILV"/>
<dbReference type="OrthoDB" id="1935530at2759"/>
<dbReference type="PhylomeDB" id="Q5M883"/>
<dbReference type="TreeFam" id="TF315438"/>
<dbReference type="Reactome" id="R-RNO-2672351">
    <property type="pathway name" value="Stimuli-sensing channels"/>
</dbReference>
<dbReference type="Reactome" id="R-RNO-5578775">
    <property type="pathway name" value="Ion homeostasis"/>
</dbReference>
<dbReference type="PRO" id="PR:Q5M883"/>
<dbReference type="Proteomes" id="UP000002494">
    <property type="component" value="Chromosome 20"/>
</dbReference>
<dbReference type="Bgee" id="ENSRNOG00000000728">
    <property type="expression patterns" value="Expressed in spleen and 18 other cell types or tissues"/>
</dbReference>
<dbReference type="GO" id="GO:0034707">
    <property type="term" value="C:chloride channel complex"/>
    <property type="evidence" value="ECO:0007669"/>
    <property type="project" value="UniProtKB-KW"/>
</dbReference>
<dbReference type="GO" id="GO:0005737">
    <property type="term" value="C:cytoplasm"/>
    <property type="evidence" value="ECO:0000266"/>
    <property type="project" value="RGD"/>
</dbReference>
<dbReference type="GO" id="GO:0016020">
    <property type="term" value="C:membrane"/>
    <property type="evidence" value="ECO:0000318"/>
    <property type="project" value="GO_Central"/>
</dbReference>
<dbReference type="GO" id="GO:0005254">
    <property type="term" value="F:chloride channel activity"/>
    <property type="evidence" value="ECO:0000318"/>
    <property type="project" value="GO_Central"/>
</dbReference>
<dbReference type="GO" id="GO:0004602">
    <property type="term" value="F:glutathione peroxidase activity"/>
    <property type="evidence" value="ECO:0000266"/>
    <property type="project" value="RGD"/>
</dbReference>
<dbReference type="GO" id="GO:0006821">
    <property type="term" value="P:chloride transport"/>
    <property type="evidence" value="ECO:0000318"/>
    <property type="project" value="GO_Central"/>
</dbReference>
<dbReference type="GO" id="GO:0010880">
    <property type="term" value="P:regulation of release of sequestered calcium ion into cytosol by sarcoplasmic reticulum"/>
    <property type="evidence" value="ECO:0000266"/>
    <property type="project" value="RGD"/>
</dbReference>
<dbReference type="CDD" id="cd10298">
    <property type="entry name" value="GST_C_CLIC2"/>
    <property type="match status" value="1"/>
</dbReference>
<dbReference type="CDD" id="cd03061">
    <property type="entry name" value="GST_N_CLIC"/>
    <property type="match status" value="1"/>
</dbReference>
<dbReference type="FunFam" id="1.20.1050.10:FF:000001">
    <property type="entry name" value="Chloride intracellular channel 2"/>
    <property type="match status" value="1"/>
</dbReference>
<dbReference type="FunFam" id="3.40.30.10:FF:000069">
    <property type="entry name" value="Chloride intracellular channel 2"/>
    <property type="match status" value="1"/>
</dbReference>
<dbReference type="Gene3D" id="1.20.1050.10">
    <property type="match status" value="1"/>
</dbReference>
<dbReference type="Gene3D" id="3.40.30.10">
    <property type="entry name" value="Glutaredoxin"/>
    <property type="match status" value="1"/>
</dbReference>
<dbReference type="InterPro" id="IPR002946">
    <property type="entry name" value="CLIC"/>
</dbReference>
<dbReference type="InterPro" id="IPR053823">
    <property type="entry name" value="CLIC_N"/>
</dbReference>
<dbReference type="InterPro" id="IPR010987">
    <property type="entry name" value="Glutathione-S-Trfase_C-like"/>
</dbReference>
<dbReference type="InterPro" id="IPR036282">
    <property type="entry name" value="Glutathione-S-Trfase_C_sf"/>
</dbReference>
<dbReference type="InterPro" id="IPR040079">
    <property type="entry name" value="Glutathione_S-Trfase"/>
</dbReference>
<dbReference type="InterPro" id="IPR030253">
    <property type="entry name" value="GST_C_CLIC-2"/>
</dbReference>
<dbReference type="InterPro" id="IPR036249">
    <property type="entry name" value="Thioredoxin-like_sf"/>
</dbReference>
<dbReference type="NCBIfam" id="TIGR00862">
    <property type="entry name" value="O-ClC"/>
    <property type="match status" value="1"/>
</dbReference>
<dbReference type="PANTHER" id="PTHR45476:SF3">
    <property type="entry name" value="CHLORIDE INTRACELLULAR CHANNEL PROTEIN"/>
    <property type="match status" value="1"/>
</dbReference>
<dbReference type="PANTHER" id="PTHR45476">
    <property type="entry name" value="CHLORIDE INTRACELLULAR CHANNEL PROTEIN 6-RELATED"/>
    <property type="match status" value="1"/>
</dbReference>
<dbReference type="Pfam" id="PF22441">
    <property type="entry name" value="CLIC-like_N"/>
    <property type="match status" value="1"/>
</dbReference>
<dbReference type="Pfam" id="PF13410">
    <property type="entry name" value="GST_C_2"/>
    <property type="match status" value="1"/>
</dbReference>
<dbReference type="PRINTS" id="PR01263">
    <property type="entry name" value="INTCLCHANNEL"/>
</dbReference>
<dbReference type="SFLD" id="SFLDS00019">
    <property type="entry name" value="Glutathione_Transferase_(cytos"/>
    <property type="match status" value="1"/>
</dbReference>
<dbReference type="SFLD" id="SFLDG00358">
    <property type="entry name" value="Main_(cytGST)"/>
    <property type="match status" value="1"/>
</dbReference>
<dbReference type="SUPFAM" id="SSF47616">
    <property type="entry name" value="GST C-terminal domain-like"/>
    <property type="match status" value="1"/>
</dbReference>
<dbReference type="SUPFAM" id="SSF52833">
    <property type="entry name" value="Thioredoxin-like"/>
    <property type="match status" value="1"/>
</dbReference>
<dbReference type="PROSITE" id="PS50405">
    <property type="entry name" value="GST_CTER"/>
    <property type="match status" value="1"/>
</dbReference>
<sequence>MASLALNTQADPEIELFVKAGSDGESIGNCPFCQRLFMILWLKGVKFNVTTIDTARKPEELKDLAPGTNPPFLIYNKELKTDFIKIEEFLEKTLAPPRYPHLSPKYKESFDVGCNLFAKFSAYIKNTQKEANKNFEKSLLREFKRLDDYLNTPLLDEIDPDSTEERTLSRRLFLDGDQLTLADCSLLPKLNIIKVAAKKYRDFDIPAEFSGVWRYLHNAYAREEFAHTCPEDKEIENTYASVAKQ</sequence>
<organism>
    <name type="scientific">Rattus norvegicus</name>
    <name type="common">Rat</name>
    <dbReference type="NCBI Taxonomy" id="10116"/>
    <lineage>
        <taxon>Eukaryota</taxon>
        <taxon>Metazoa</taxon>
        <taxon>Chordata</taxon>
        <taxon>Craniata</taxon>
        <taxon>Vertebrata</taxon>
        <taxon>Euteleostomi</taxon>
        <taxon>Mammalia</taxon>
        <taxon>Eutheria</taxon>
        <taxon>Euarchontoglires</taxon>
        <taxon>Glires</taxon>
        <taxon>Rodentia</taxon>
        <taxon>Myomorpha</taxon>
        <taxon>Muroidea</taxon>
        <taxon>Muridae</taxon>
        <taxon>Murinae</taxon>
        <taxon>Rattus</taxon>
    </lineage>
</organism>